<feature type="chain" id="PRO_1000116874" description="2-dehydro-3-deoxyphosphooctonate aldolase">
    <location>
        <begin position="1"/>
        <end position="281"/>
    </location>
</feature>
<dbReference type="EC" id="2.5.1.55" evidence="1"/>
<dbReference type="EMBL" id="CP001132">
    <property type="protein sequence ID" value="ACH83220.1"/>
    <property type="molecule type" value="Genomic_DNA"/>
</dbReference>
<dbReference type="RefSeq" id="WP_012536391.1">
    <property type="nucleotide sequence ID" value="NC_011206.1"/>
</dbReference>
<dbReference type="SMR" id="B5EPM6"/>
<dbReference type="GeneID" id="65280175"/>
<dbReference type="KEGG" id="afe:Lferr_0974"/>
<dbReference type="eggNOG" id="COG2877">
    <property type="taxonomic scope" value="Bacteria"/>
</dbReference>
<dbReference type="HOGENOM" id="CLU_036666_0_0_6"/>
<dbReference type="UniPathway" id="UPA00030"/>
<dbReference type="UniPathway" id="UPA00357">
    <property type="reaction ID" value="UER00474"/>
</dbReference>
<dbReference type="GO" id="GO:0005737">
    <property type="term" value="C:cytoplasm"/>
    <property type="evidence" value="ECO:0007669"/>
    <property type="project" value="UniProtKB-SubCell"/>
</dbReference>
<dbReference type="GO" id="GO:0008676">
    <property type="term" value="F:3-deoxy-8-phosphooctulonate synthase activity"/>
    <property type="evidence" value="ECO:0007669"/>
    <property type="project" value="UniProtKB-UniRule"/>
</dbReference>
<dbReference type="GO" id="GO:0019294">
    <property type="term" value="P:keto-3-deoxy-D-manno-octulosonic acid biosynthetic process"/>
    <property type="evidence" value="ECO:0007669"/>
    <property type="project" value="UniProtKB-UniRule"/>
</dbReference>
<dbReference type="Gene3D" id="3.20.20.70">
    <property type="entry name" value="Aldolase class I"/>
    <property type="match status" value="1"/>
</dbReference>
<dbReference type="HAMAP" id="MF_00056">
    <property type="entry name" value="KDO8P_synth"/>
    <property type="match status" value="1"/>
</dbReference>
<dbReference type="InterPro" id="IPR013785">
    <property type="entry name" value="Aldolase_TIM"/>
</dbReference>
<dbReference type="InterPro" id="IPR006218">
    <property type="entry name" value="DAHP1/KDSA"/>
</dbReference>
<dbReference type="InterPro" id="IPR006269">
    <property type="entry name" value="KDO8P_synthase"/>
</dbReference>
<dbReference type="NCBIfam" id="TIGR01362">
    <property type="entry name" value="KDO8P_synth"/>
    <property type="match status" value="1"/>
</dbReference>
<dbReference type="NCBIfam" id="NF003543">
    <property type="entry name" value="PRK05198.1"/>
    <property type="match status" value="1"/>
</dbReference>
<dbReference type="PANTHER" id="PTHR21057">
    <property type="entry name" value="PHOSPHO-2-DEHYDRO-3-DEOXYHEPTONATE ALDOLASE"/>
    <property type="match status" value="1"/>
</dbReference>
<dbReference type="Pfam" id="PF00793">
    <property type="entry name" value="DAHP_synth_1"/>
    <property type="match status" value="1"/>
</dbReference>
<dbReference type="SUPFAM" id="SSF51569">
    <property type="entry name" value="Aldolase"/>
    <property type="match status" value="1"/>
</dbReference>
<proteinExistence type="inferred from homology"/>
<accession>B5EPM6</accession>
<organism>
    <name type="scientific">Acidithiobacillus ferrooxidans (strain ATCC 53993 / BNL-5-31)</name>
    <name type="common">Leptospirillum ferrooxidans (ATCC 53993)</name>
    <dbReference type="NCBI Taxonomy" id="380394"/>
    <lineage>
        <taxon>Bacteria</taxon>
        <taxon>Pseudomonadati</taxon>
        <taxon>Pseudomonadota</taxon>
        <taxon>Acidithiobacillia</taxon>
        <taxon>Acidithiobacillales</taxon>
        <taxon>Acidithiobacillaceae</taxon>
        <taxon>Acidithiobacillus</taxon>
    </lineage>
</organism>
<evidence type="ECO:0000255" key="1">
    <source>
        <dbReference type="HAMAP-Rule" id="MF_00056"/>
    </source>
</evidence>
<protein>
    <recommendedName>
        <fullName evidence="1">2-dehydro-3-deoxyphosphooctonate aldolase</fullName>
        <ecNumber evidence="1">2.5.1.55</ecNumber>
    </recommendedName>
    <alternativeName>
        <fullName evidence="1">3-deoxy-D-manno-octulosonic acid 8-phosphate synthase</fullName>
    </alternativeName>
    <alternativeName>
        <fullName evidence="1">KDO-8-phosphate synthase</fullName>
        <shortName evidence="1">KDO 8-P synthase</shortName>
        <shortName evidence="1">KDOPS</shortName>
    </alternativeName>
    <alternativeName>
        <fullName evidence="1">Phospho-2-dehydro-3-deoxyoctonate aldolase</fullName>
    </alternativeName>
</protein>
<keyword id="KW-0963">Cytoplasm</keyword>
<keyword id="KW-0448">Lipopolysaccharide biosynthesis</keyword>
<keyword id="KW-0808">Transferase</keyword>
<name>KDSA_ACIF5</name>
<gene>
    <name evidence="1" type="primary">kdsA</name>
    <name type="ordered locus">Lferr_0974</name>
</gene>
<sequence>MRLCGFEAGLQHPFFLMAGPCAIESESLALRTAEDLRDICARLGIPFIYKSSYDKANRSSGQSFRGPGMDEGLRILEKVRREVGVPVVTDVHEKEDVSAVAEVVDVLQTPAFLCRQTDFIQAVAAAGKPVNIKKGQFLAPWDMLHVASKAKATGNEQIMVCERGASFGYNNLVSDMRSLAVMRQTGCPVVFDATHSVQLPGGQGDRSGGQREFIPVLARAAVAAGVSGLFMETHPNPADALSDGPNAWPLGRMEDLLRILQHIDHVVKNQDFPENYPEELV</sequence>
<reference key="1">
    <citation type="submission" date="2008-08" db="EMBL/GenBank/DDBJ databases">
        <title>Complete sequence of Acidithiobacillus ferrooxidans ATCC 53993.</title>
        <authorList>
            <person name="Lucas S."/>
            <person name="Copeland A."/>
            <person name="Lapidus A."/>
            <person name="Glavina del Rio T."/>
            <person name="Dalin E."/>
            <person name="Tice H."/>
            <person name="Bruce D."/>
            <person name="Goodwin L."/>
            <person name="Pitluck S."/>
            <person name="Sims D."/>
            <person name="Brettin T."/>
            <person name="Detter J.C."/>
            <person name="Han C."/>
            <person name="Kuske C.R."/>
            <person name="Larimer F."/>
            <person name="Land M."/>
            <person name="Hauser L."/>
            <person name="Kyrpides N."/>
            <person name="Lykidis A."/>
            <person name="Borole A.P."/>
        </authorList>
    </citation>
    <scope>NUCLEOTIDE SEQUENCE [LARGE SCALE GENOMIC DNA]</scope>
    <source>
        <strain>ATCC 53993 / BNL-5-31</strain>
    </source>
</reference>
<comment type="catalytic activity">
    <reaction evidence="1">
        <text>D-arabinose 5-phosphate + phosphoenolpyruvate + H2O = 3-deoxy-alpha-D-manno-2-octulosonate-8-phosphate + phosphate</text>
        <dbReference type="Rhea" id="RHEA:14053"/>
        <dbReference type="ChEBI" id="CHEBI:15377"/>
        <dbReference type="ChEBI" id="CHEBI:43474"/>
        <dbReference type="ChEBI" id="CHEBI:57693"/>
        <dbReference type="ChEBI" id="CHEBI:58702"/>
        <dbReference type="ChEBI" id="CHEBI:85985"/>
        <dbReference type="EC" id="2.5.1.55"/>
    </reaction>
</comment>
<comment type="pathway">
    <text evidence="1">Carbohydrate biosynthesis; 3-deoxy-D-manno-octulosonate biosynthesis; 3-deoxy-D-manno-octulosonate from D-ribulose 5-phosphate: step 2/3.</text>
</comment>
<comment type="pathway">
    <text evidence="1">Bacterial outer membrane biogenesis; lipopolysaccharide biosynthesis.</text>
</comment>
<comment type="subcellular location">
    <subcellularLocation>
        <location evidence="1">Cytoplasm</location>
    </subcellularLocation>
</comment>
<comment type="similarity">
    <text evidence="1">Belongs to the KdsA family.</text>
</comment>